<proteinExistence type="inferred from homology"/>
<organism>
    <name type="scientific">Anaeromyxobacter dehalogenans (strain 2CP-1 / ATCC BAA-258)</name>
    <dbReference type="NCBI Taxonomy" id="455488"/>
    <lineage>
        <taxon>Bacteria</taxon>
        <taxon>Pseudomonadati</taxon>
        <taxon>Myxococcota</taxon>
        <taxon>Myxococcia</taxon>
        <taxon>Myxococcales</taxon>
        <taxon>Cystobacterineae</taxon>
        <taxon>Anaeromyxobacteraceae</taxon>
        <taxon>Anaeromyxobacter</taxon>
    </lineage>
</organism>
<gene>
    <name evidence="1" type="primary">ttcA</name>
    <name type="ordered locus">A2cp1_0954</name>
</gene>
<feature type="chain" id="PRO_1000188625" description="tRNA-cytidine(32) 2-sulfurtransferase">
    <location>
        <begin position="1"/>
        <end position="291"/>
    </location>
</feature>
<feature type="region of interest" description="Disordered" evidence="2">
    <location>
        <begin position="258"/>
        <end position="291"/>
    </location>
</feature>
<feature type="short sequence motif" description="PP-loop motif" evidence="1">
    <location>
        <begin position="36"/>
        <end position="41"/>
    </location>
</feature>
<feature type="compositionally biased region" description="Acidic residues" evidence="2">
    <location>
        <begin position="262"/>
        <end position="273"/>
    </location>
</feature>
<feature type="binding site" evidence="1">
    <location>
        <position position="111"/>
    </location>
    <ligand>
        <name>[4Fe-4S] cluster</name>
        <dbReference type="ChEBI" id="CHEBI:49883"/>
    </ligand>
</feature>
<feature type="binding site" evidence="1">
    <location>
        <position position="114"/>
    </location>
    <ligand>
        <name>[4Fe-4S] cluster</name>
        <dbReference type="ChEBI" id="CHEBI:49883"/>
    </ligand>
</feature>
<feature type="binding site" evidence="1">
    <location>
        <position position="202"/>
    </location>
    <ligand>
        <name>[4Fe-4S] cluster</name>
        <dbReference type="ChEBI" id="CHEBI:49883"/>
    </ligand>
</feature>
<reference key="1">
    <citation type="submission" date="2009-01" db="EMBL/GenBank/DDBJ databases">
        <title>Complete sequence of Anaeromyxobacter dehalogenans 2CP-1.</title>
        <authorList>
            <person name="Lucas S."/>
            <person name="Copeland A."/>
            <person name="Lapidus A."/>
            <person name="Glavina del Rio T."/>
            <person name="Dalin E."/>
            <person name="Tice H."/>
            <person name="Bruce D."/>
            <person name="Goodwin L."/>
            <person name="Pitluck S."/>
            <person name="Saunders E."/>
            <person name="Brettin T."/>
            <person name="Detter J.C."/>
            <person name="Han C."/>
            <person name="Larimer F."/>
            <person name="Land M."/>
            <person name="Hauser L."/>
            <person name="Kyrpides N."/>
            <person name="Ovchinnikova G."/>
            <person name="Beliaev A.S."/>
            <person name="Richardson P."/>
        </authorList>
    </citation>
    <scope>NUCLEOTIDE SEQUENCE [LARGE SCALE GENOMIC DNA]</scope>
    <source>
        <strain>2CP-1 / ATCC BAA-258</strain>
    </source>
</reference>
<dbReference type="EC" id="2.8.1.-" evidence="1"/>
<dbReference type="EMBL" id="CP001359">
    <property type="protein sequence ID" value="ACL64305.1"/>
    <property type="molecule type" value="Genomic_DNA"/>
</dbReference>
<dbReference type="RefSeq" id="WP_012632307.1">
    <property type="nucleotide sequence ID" value="NC_011891.1"/>
</dbReference>
<dbReference type="SMR" id="B8JEH9"/>
<dbReference type="KEGG" id="acp:A2cp1_0954"/>
<dbReference type="HOGENOM" id="CLU_026481_0_0_7"/>
<dbReference type="Proteomes" id="UP000007089">
    <property type="component" value="Chromosome"/>
</dbReference>
<dbReference type="GO" id="GO:0005737">
    <property type="term" value="C:cytoplasm"/>
    <property type="evidence" value="ECO:0007669"/>
    <property type="project" value="UniProtKB-SubCell"/>
</dbReference>
<dbReference type="GO" id="GO:0051539">
    <property type="term" value="F:4 iron, 4 sulfur cluster binding"/>
    <property type="evidence" value="ECO:0007669"/>
    <property type="project" value="UniProtKB-KW"/>
</dbReference>
<dbReference type="GO" id="GO:0005524">
    <property type="term" value="F:ATP binding"/>
    <property type="evidence" value="ECO:0007669"/>
    <property type="project" value="UniProtKB-KW"/>
</dbReference>
<dbReference type="GO" id="GO:0046872">
    <property type="term" value="F:metal ion binding"/>
    <property type="evidence" value="ECO:0007669"/>
    <property type="project" value="UniProtKB-KW"/>
</dbReference>
<dbReference type="GO" id="GO:0016740">
    <property type="term" value="F:transferase activity"/>
    <property type="evidence" value="ECO:0007669"/>
    <property type="project" value="UniProtKB-KW"/>
</dbReference>
<dbReference type="GO" id="GO:0000049">
    <property type="term" value="F:tRNA binding"/>
    <property type="evidence" value="ECO:0007669"/>
    <property type="project" value="UniProtKB-KW"/>
</dbReference>
<dbReference type="GO" id="GO:0006400">
    <property type="term" value="P:tRNA modification"/>
    <property type="evidence" value="ECO:0007669"/>
    <property type="project" value="UniProtKB-ARBA"/>
</dbReference>
<dbReference type="CDD" id="cd24138">
    <property type="entry name" value="TtcA-like"/>
    <property type="match status" value="1"/>
</dbReference>
<dbReference type="Gene3D" id="3.40.50.620">
    <property type="entry name" value="HUPs"/>
    <property type="match status" value="1"/>
</dbReference>
<dbReference type="HAMAP" id="MF_01850">
    <property type="entry name" value="TtcA"/>
    <property type="match status" value="1"/>
</dbReference>
<dbReference type="InterPro" id="IPR014729">
    <property type="entry name" value="Rossmann-like_a/b/a_fold"/>
</dbReference>
<dbReference type="InterPro" id="IPR011063">
    <property type="entry name" value="TilS/TtcA_N"/>
</dbReference>
<dbReference type="InterPro" id="IPR012089">
    <property type="entry name" value="tRNA_Cyd_32_2_STrfase"/>
</dbReference>
<dbReference type="InterPro" id="IPR035107">
    <property type="entry name" value="tRNA_thiolation_TtcA_Ctu1"/>
</dbReference>
<dbReference type="NCBIfam" id="NF007972">
    <property type="entry name" value="PRK10696.1"/>
    <property type="match status" value="1"/>
</dbReference>
<dbReference type="PANTHER" id="PTHR43686:SF1">
    <property type="entry name" value="AMINOTRAN_5 DOMAIN-CONTAINING PROTEIN"/>
    <property type="match status" value="1"/>
</dbReference>
<dbReference type="PANTHER" id="PTHR43686">
    <property type="entry name" value="SULFURTRANSFERASE-RELATED"/>
    <property type="match status" value="1"/>
</dbReference>
<dbReference type="Pfam" id="PF01171">
    <property type="entry name" value="ATP_bind_3"/>
    <property type="match status" value="1"/>
</dbReference>
<dbReference type="PIRSF" id="PIRSF004976">
    <property type="entry name" value="ATPase_YdaO"/>
    <property type="match status" value="1"/>
</dbReference>
<dbReference type="SUPFAM" id="SSF52402">
    <property type="entry name" value="Adenine nucleotide alpha hydrolases-like"/>
    <property type="match status" value="1"/>
</dbReference>
<protein>
    <recommendedName>
        <fullName evidence="1">tRNA-cytidine(32) 2-sulfurtransferase</fullName>
        <ecNumber evidence="1">2.8.1.-</ecNumber>
    </recommendedName>
    <alternativeName>
        <fullName evidence="1">Two-thiocytidine biosynthesis protein A</fullName>
    </alternativeName>
    <alternativeName>
        <fullName evidence="1">tRNA 2-thiocytidine biosynthesis protein TtcA</fullName>
    </alternativeName>
</protein>
<sequence>MQQIHRLERKLLRATAEAIRDFDLVSQGDRIMVAVSGGKDSYTLLHLLMRLRERAPIDFDLVAVNLDQGQPGFPAQVVEDHLRSVGVPYRMLQRDTYSVVRRLVPEGKTTCPVCSRLRRGVLYNAAVEMGCTKIALGHHRDDLVETLLLSALYSGALKSMPPKLRSRDGRNVVVRPLCYAAEEDVAAFAEAMRFPIVPCDLCGSQPNLRRKRVKRLLAELSAEHPAVKGNLLHALAHVVPSHLLDRDLHRQLADATGRDPWLDAEDEEAEDCGEPPAGDGVVSLGGARGGR</sequence>
<keyword id="KW-0004">4Fe-4S</keyword>
<keyword id="KW-0067">ATP-binding</keyword>
<keyword id="KW-0963">Cytoplasm</keyword>
<keyword id="KW-0408">Iron</keyword>
<keyword id="KW-0411">Iron-sulfur</keyword>
<keyword id="KW-0460">Magnesium</keyword>
<keyword id="KW-0479">Metal-binding</keyword>
<keyword id="KW-0547">Nucleotide-binding</keyword>
<keyword id="KW-0694">RNA-binding</keyword>
<keyword id="KW-0808">Transferase</keyword>
<keyword id="KW-0819">tRNA processing</keyword>
<keyword id="KW-0820">tRNA-binding</keyword>
<comment type="function">
    <text evidence="1">Catalyzes the ATP-dependent 2-thiolation of cytidine in position 32 of tRNA, to form 2-thiocytidine (s(2)C32). The sulfur atoms are provided by the cysteine/cysteine desulfurase (IscS) system.</text>
</comment>
<comment type="catalytic activity">
    <reaction evidence="1">
        <text>cytidine(32) in tRNA + S-sulfanyl-L-cysteinyl-[cysteine desulfurase] + AH2 + ATP = 2-thiocytidine(32) in tRNA + L-cysteinyl-[cysteine desulfurase] + A + AMP + diphosphate + H(+)</text>
        <dbReference type="Rhea" id="RHEA:57048"/>
        <dbReference type="Rhea" id="RHEA-COMP:10288"/>
        <dbReference type="Rhea" id="RHEA-COMP:12157"/>
        <dbReference type="Rhea" id="RHEA-COMP:12158"/>
        <dbReference type="Rhea" id="RHEA-COMP:14821"/>
        <dbReference type="ChEBI" id="CHEBI:13193"/>
        <dbReference type="ChEBI" id="CHEBI:15378"/>
        <dbReference type="ChEBI" id="CHEBI:17499"/>
        <dbReference type="ChEBI" id="CHEBI:29950"/>
        <dbReference type="ChEBI" id="CHEBI:30616"/>
        <dbReference type="ChEBI" id="CHEBI:33019"/>
        <dbReference type="ChEBI" id="CHEBI:61963"/>
        <dbReference type="ChEBI" id="CHEBI:82748"/>
        <dbReference type="ChEBI" id="CHEBI:141453"/>
        <dbReference type="ChEBI" id="CHEBI:456215"/>
    </reaction>
    <physiologicalReaction direction="left-to-right" evidence="1">
        <dbReference type="Rhea" id="RHEA:57049"/>
    </physiologicalReaction>
</comment>
<comment type="cofactor">
    <cofactor evidence="1">
        <name>Mg(2+)</name>
        <dbReference type="ChEBI" id="CHEBI:18420"/>
    </cofactor>
</comment>
<comment type="cofactor">
    <cofactor evidence="1">
        <name>[4Fe-4S] cluster</name>
        <dbReference type="ChEBI" id="CHEBI:49883"/>
    </cofactor>
    <text evidence="1">Binds 1 [4Fe-4S] cluster per subunit. The cluster is chelated by three Cys residues, the fourth Fe has a free coordination site that may bind a sulfur atom transferred from the persulfide of IscS.</text>
</comment>
<comment type="pathway">
    <text evidence="1">tRNA modification.</text>
</comment>
<comment type="subunit">
    <text evidence="1">Homodimer.</text>
</comment>
<comment type="subcellular location">
    <subcellularLocation>
        <location evidence="1">Cytoplasm</location>
    </subcellularLocation>
</comment>
<comment type="miscellaneous">
    <text evidence="1">The thiolation reaction likely consists of two steps: a first activation step by ATP to form an adenylated intermediate of the target base of tRNA, and a second nucleophilic substitution step of the sulfur (S) atom supplied by the hydrosulfide attached to the Fe-S cluster.</text>
</comment>
<comment type="similarity">
    <text evidence="1">Belongs to the TtcA family.</text>
</comment>
<evidence type="ECO:0000255" key="1">
    <source>
        <dbReference type="HAMAP-Rule" id="MF_01850"/>
    </source>
</evidence>
<evidence type="ECO:0000256" key="2">
    <source>
        <dbReference type="SAM" id="MobiDB-lite"/>
    </source>
</evidence>
<accession>B8JEH9</accession>
<name>TTCA_ANAD2</name>